<dbReference type="EC" id="2.3.2.27" evidence="10 18"/>
<dbReference type="EMBL" id="X57111">
    <property type="protein sequence ID" value="CAA40394.1"/>
    <property type="molecule type" value="mRNA"/>
</dbReference>
<dbReference type="EMBL" id="AK028730">
    <property type="protein sequence ID" value="BAC26087.1"/>
    <property type="molecule type" value="mRNA"/>
</dbReference>
<dbReference type="EMBL" id="AK153915">
    <property type="protein sequence ID" value="BAE32253.1"/>
    <property type="molecule type" value="mRNA"/>
</dbReference>
<dbReference type="EMBL" id="BC125285">
    <property type="protein sequence ID" value="AAI25286.1"/>
    <property type="molecule type" value="mRNA"/>
</dbReference>
<dbReference type="CCDS" id="CCDS40598.1"/>
<dbReference type="PIR" id="B43817">
    <property type="entry name" value="B43817"/>
</dbReference>
<dbReference type="RefSeq" id="NP_031645.2">
    <property type="nucleotide sequence ID" value="NM_007619.2"/>
</dbReference>
<dbReference type="PDB" id="2D9S">
    <property type="method" value="NMR"/>
    <property type="chains" value="A/B=863-902"/>
</dbReference>
<dbReference type="PDBsum" id="2D9S"/>
<dbReference type="BMRB" id="P22682"/>
<dbReference type="SMR" id="P22682"/>
<dbReference type="BioGRID" id="198527">
    <property type="interactions" value="76"/>
</dbReference>
<dbReference type="CORUM" id="P22682"/>
<dbReference type="DIP" id="DIP-33472N"/>
<dbReference type="FunCoup" id="P22682">
    <property type="interactions" value="2918"/>
</dbReference>
<dbReference type="IntAct" id="P22682">
    <property type="interactions" value="111"/>
</dbReference>
<dbReference type="MINT" id="P22682"/>
<dbReference type="STRING" id="10090.ENSMUSP00000146244"/>
<dbReference type="GlyGen" id="P22682">
    <property type="glycosylation" value="2 sites, 1 O-linked glycan (2 sites)"/>
</dbReference>
<dbReference type="iPTMnet" id="P22682"/>
<dbReference type="PhosphoSitePlus" id="P22682"/>
<dbReference type="SwissPalm" id="P22682"/>
<dbReference type="jPOST" id="P22682"/>
<dbReference type="PaxDb" id="10090-ENSMUSP00000041902"/>
<dbReference type="PeptideAtlas" id="P22682"/>
<dbReference type="ProteomicsDB" id="281225"/>
<dbReference type="Pumba" id="P22682"/>
<dbReference type="Antibodypedia" id="3815">
    <property type="antibodies" value="1155 antibodies from 48 providers"/>
</dbReference>
<dbReference type="DNASU" id="12402"/>
<dbReference type="Ensembl" id="ENSMUST00000206720.2">
    <property type="protein sequence ID" value="ENSMUSP00000146244.2"/>
    <property type="gene ID" value="ENSMUSG00000034342.10"/>
</dbReference>
<dbReference type="GeneID" id="12402"/>
<dbReference type="KEGG" id="mmu:12402"/>
<dbReference type="UCSC" id="uc009pce.1">
    <property type="organism name" value="mouse"/>
</dbReference>
<dbReference type="AGR" id="MGI:88279"/>
<dbReference type="CTD" id="867"/>
<dbReference type="MGI" id="MGI:88279">
    <property type="gene designation" value="Cbl"/>
</dbReference>
<dbReference type="VEuPathDB" id="HostDB:ENSMUSG00000034342"/>
<dbReference type="eggNOG" id="KOG1785">
    <property type="taxonomic scope" value="Eukaryota"/>
</dbReference>
<dbReference type="GeneTree" id="ENSGT00940000155772"/>
<dbReference type="HOGENOM" id="CLU_013535_3_0_1"/>
<dbReference type="InParanoid" id="P22682"/>
<dbReference type="OMA" id="GCMYEAM"/>
<dbReference type="OrthoDB" id="7237699at2759"/>
<dbReference type="PhylomeDB" id="P22682"/>
<dbReference type="TreeFam" id="TF314210"/>
<dbReference type="Reactome" id="R-MMU-1059683">
    <property type="pathway name" value="Interleukin-6 signaling"/>
</dbReference>
<dbReference type="Reactome" id="R-MMU-1295596">
    <property type="pathway name" value="Spry regulation of FGF signaling"/>
</dbReference>
<dbReference type="Reactome" id="R-MMU-1433559">
    <property type="pathway name" value="Regulation of KIT signaling"/>
</dbReference>
<dbReference type="Reactome" id="R-MMU-182971">
    <property type="pathway name" value="EGFR downregulation"/>
</dbReference>
<dbReference type="Reactome" id="R-MMU-2173789">
    <property type="pathway name" value="TGF-beta receptor signaling activates SMADs"/>
</dbReference>
<dbReference type="Reactome" id="R-MMU-5654726">
    <property type="pathway name" value="Negative regulation of FGFR1 signaling"/>
</dbReference>
<dbReference type="Reactome" id="R-MMU-5654727">
    <property type="pathway name" value="Negative regulation of FGFR2 signaling"/>
</dbReference>
<dbReference type="Reactome" id="R-MMU-5654732">
    <property type="pathway name" value="Negative regulation of FGFR3 signaling"/>
</dbReference>
<dbReference type="Reactome" id="R-MMU-5654733">
    <property type="pathway name" value="Negative regulation of FGFR4 signaling"/>
</dbReference>
<dbReference type="Reactome" id="R-MMU-6807004">
    <property type="pathway name" value="Negative regulation of MET activity"/>
</dbReference>
<dbReference type="Reactome" id="R-MMU-8849469">
    <property type="pathway name" value="PTK6 Regulates RTKs and Their Effectors AKT1 and DOK1"/>
</dbReference>
<dbReference type="Reactome" id="R-MMU-8856825">
    <property type="pathway name" value="Cargo recognition for clathrin-mediated endocytosis"/>
</dbReference>
<dbReference type="Reactome" id="R-MMU-8856828">
    <property type="pathway name" value="Clathrin-mediated endocytosis"/>
</dbReference>
<dbReference type="Reactome" id="R-MMU-912631">
    <property type="pathway name" value="Regulation of signaling by CBL"/>
</dbReference>
<dbReference type="Reactome" id="R-MMU-9706369">
    <property type="pathway name" value="Negative regulation of FLT3"/>
</dbReference>
<dbReference type="UniPathway" id="UPA00143"/>
<dbReference type="BioGRID-ORCS" id="12402">
    <property type="hits" value="2 hits in 79 CRISPR screens"/>
</dbReference>
<dbReference type="ChiTaRS" id="Cbl">
    <property type="organism name" value="mouse"/>
</dbReference>
<dbReference type="EvolutionaryTrace" id="P22682"/>
<dbReference type="PRO" id="PR:P22682"/>
<dbReference type="Proteomes" id="UP000000589">
    <property type="component" value="Chromosome 9"/>
</dbReference>
<dbReference type="RNAct" id="P22682">
    <property type="molecule type" value="protein"/>
</dbReference>
<dbReference type="Bgee" id="ENSMUSG00000034342">
    <property type="expression patterns" value="Expressed in thymus and 244 other cell types or tissues"/>
</dbReference>
<dbReference type="ExpressionAtlas" id="P22682">
    <property type="expression patterns" value="baseline and differential"/>
</dbReference>
<dbReference type="GO" id="GO:0005929">
    <property type="term" value="C:cilium"/>
    <property type="evidence" value="ECO:0000314"/>
    <property type="project" value="UniProtKB"/>
</dbReference>
<dbReference type="GO" id="GO:0005829">
    <property type="term" value="C:cytosol"/>
    <property type="evidence" value="ECO:0000304"/>
    <property type="project" value="Reactome"/>
</dbReference>
<dbReference type="GO" id="GO:0016600">
    <property type="term" value="C:flotillin complex"/>
    <property type="evidence" value="ECO:0000314"/>
    <property type="project" value="BHF-UCL"/>
</dbReference>
<dbReference type="GO" id="GO:0005925">
    <property type="term" value="C:focal adhesion"/>
    <property type="evidence" value="ECO:0007669"/>
    <property type="project" value="Ensembl"/>
</dbReference>
<dbReference type="GO" id="GO:0005794">
    <property type="term" value="C:Golgi apparatus"/>
    <property type="evidence" value="ECO:0000314"/>
    <property type="project" value="UniProtKB"/>
</dbReference>
<dbReference type="GO" id="GO:0030426">
    <property type="term" value="C:growth cone"/>
    <property type="evidence" value="ECO:0007669"/>
    <property type="project" value="Ensembl"/>
</dbReference>
<dbReference type="GO" id="GO:0048471">
    <property type="term" value="C:perinuclear region of cytoplasm"/>
    <property type="evidence" value="ECO:0007669"/>
    <property type="project" value="Ensembl"/>
</dbReference>
<dbReference type="GO" id="GO:0005886">
    <property type="term" value="C:plasma membrane"/>
    <property type="evidence" value="ECO:0000314"/>
    <property type="project" value="MGI"/>
</dbReference>
<dbReference type="GO" id="GO:0005509">
    <property type="term" value="F:calcium ion binding"/>
    <property type="evidence" value="ECO:0007669"/>
    <property type="project" value="InterPro"/>
</dbReference>
<dbReference type="GO" id="GO:0046875">
    <property type="term" value="F:ephrin receptor binding"/>
    <property type="evidence" value="ECO:0000353"/>
    <property type="project" value="UniProtKB"/>
</dbReference>
<dbReference type="GO" id="GO:0036312">
    <property type="term" value="F:phosphatidylinositol 3-kinase regulatory subunit binding"/>
    <property type="evidence" value="ECO:0007669"/>
    <property type="project" value="Ensembl"/>
</dbReference>
<dbReference type="GO" id="GO:0001784">
    <property type="term" value="F:phosphotyrosine residue binding"/>
    <property type="evidence" value="ECO:0007669"/>
    <property type="project" value="InterPro"/>
</dbReference>
<dbReference type="GO" id="GO:1990782">
    <property type="term" value="F:protein tyrosine kinase binding"/>
    <property type="evidence" value="ECO:0007669"/>
    <property type="project" value="Ensembl"/>
</dbReference>
<dbReference type="GO" id="GO:0017124">
    <property type="term" value="F:SH3 domain binding"/>
    <property type="evidence" value="ECO:0000353"/>
    <property type="project" value="BHF-UCL"/>
</dbReference>
<dbReference type="GO" id="GO:0061630">
    <property type="term" value="F:ubiquitin protein ligase activity"/>
    <property type="evidence" value="ECO:0000314"/>
    <property type="project" value="MGI"/>
</dbReference>
<dbReference type="GO" id="GO:0008270">
    <property type="term" value="F:zinc ion binding"/>
    <property type="evidence" value="ECO:0007669"/>
    <property type="project" value="UniProtKB-KW"/>
</dbReference>
<dbReference type="GO" id="GO:0045453">
    <property type="term" value="P:bone resorption"/>
    <property type="evidence" value="ECO:0000250"/>
    <property type="project" value="UniProtKB"/>
</dbReference>
<dbReference type="GO" id="GO:0007166">
    <property type="term" value="P:cell surface receptor signaling pathway"/>
    <property type="evidence" value="ECO:0007669"/>
    <property type="project" value="InterPro"/>
</dbReference>
<dbReference type="GO" id="GO:0071456">
    <property type="term" value="P:cellular response to hypoxia"/>
    <property type="evidence" value="ECO:0007669"/>
    <property type="project" value="Ensembl"/>
</dbReference>
<dbReference type="GO" id="GO:1990090">
    <property type="term" value="P:cellular response to nerve growth factor stimulus"/>
    <property type="evidence" value="ECO:0007669"/>
    <property type="project" value="Ensembl"/>
</dbReference>
<dbReference type="GO" id="GO:0036120">
    <property type="term" value="P:cellular response to platelet-derived growth factor stimulus"/>
    <property type="evidence" value="ECO:0007669"/>
    <property type="project" value="Ensembl"/>
</dbReference>
<dbReference type="GO" id="GO:0006974">
    <property type="term" value="P:DNA damage response"/>
    <property type="evidence" value="ECO:0007669"/>
    <property type="project" value="Ensembl"/>
</dbReference>
<dbReference type="GO" id="GO:0008584">
    <property type="term" value="P:male gonad development"/>
    <property type="evidence" value="ECO:0007669"/>
    <property type="project" value="Ensembl"/>
</dbReference>
<dbReference type="GO" id="GO:0043303">
    <property type="term" value="P:mast cell degranulation"/>
    <property type="evidence" value="ECO:0007669"/>
    <property type="project" value="Ensembl"/>
</dbReference>
<dbReference type="GO" id="GO:0043066">
    <property type="term" value="P:negative regulation of apoptotic process"/>
    <property type="evidence" value="ECO:0007669"/>
    <property type="project" value="Ensembl"/>
</dbReference>
<dbReference type="GO" id="GO:0042059">
    <property type="term" value="P:negative regulation of epidermal growth factor receptor signaling pathway"/>
    <property type="evidence" value="ECO:0000314"/>
    <property type="project" value="MGI"/>
</dbReference>
<dbReference type="GO" id="GO:0051897">
    <property type="term" value="P:positive regulation of phosphatidylinositol 3-kinase/protein kinase B signal transduction"/>
    <property type="evidence" value="ECO:0007669"/>
    <property type="project" value="Ensembl"/>
</dbReference>
<dbReference type="GO" id="GO:0048260">
    <property type="term" value="P:positive regulation of receptor-mediated endocytosis"/>
    <property type="evidence" value="ECO:0000250"/>
    <property type="project" value="UniProtKB"/>
</dbReference>
<dbReference type="GO" id="GO:0051865">
    <property type="term" value="P:protein autoubiquitination"/>
    <property type="evidence" value="ECO:0007669"/>
    <property type="project" value="Ensembl"/>
</dbReference>
<dbReference type="GO" id="GO:0006513">
    <property type="term" value="P:protein monoubiquitination"/>
    <property type="evidence" value="ECO:0007669"/>
    <property type="project" value="Ensembl"/>
</dbReference>
<dbReference type="GO" id="GO:0006468">
    <property type="term" value="P:protein phosphorylation"/>
    <property type="evidence" value="ECO:0000250"/>
    <property type="project" value="UniProtKB"/>
</dbReference>
<dbReference type="GO" id="GO:0000209">
    <property type="term" value="P:protein polyubiquitination"/>
    <property type="evidence" value="ECO:0007669"/>
    <property type="project" value="Ensembl"/>
</dbReference>
<dbReference type="GO" id="GO:0016567">
    <property type="term" value="P:protein ubiquitination"/>
    <property type="evidence" value="ECO:0000314"/>
    <property type="project" value="MGI"/>
</dbReference>
<dbReference type="GO" id="GO:2000583">
    <property type="term" value="P:regulation of platelet-derived growth factor receptor-alpha signaling pathway"/>
    <property type="evidence" value="ECO:0000315"/>
    <property type="project" value="UniProtKB"/>
</dbReference>
<dbReference type="GO" id="GO:0032487">
    <property type="term" value="P:regulation of Rap protein signal transduction"/>
    <property type="evidence" value="ECO:0000315"/>
    <property type="project" value="MGI"/>
</dbReference>
<dbReference type="GO" id="GO:0014823">
    <property type="term" value="P:response to activity"/>
    <property type="evidence" value="ECO:0007669"/>
    <property type="project" value="Ensembl"/>
</dbReference>
<dbReference type="GO" id="GO:0045471">
    <property type="term" value="P:response to ethanol"/>
    <property type="evidence" value="ECO:0007669"/>
    <property type="project" value="Ensembl"/>
</dbReference>
<dbReference type="GO" id="GO:0010332">
    <property type="term" value="P:response to gamma radiation"/>
    <property type="evidence" value="ECO:0007669"/>
    <property type="project" value="Ensembl"/>
</dbReference>
<dbReference type="GO" id="GO:0042594">
    <property type="term" value="P:response to starvation"/>
    <property type="evidence" value="ECO:0007669"/>
    <property type="project" value="Ensembl"/>
</dbReference>
<dbReference type="GO" id="GO:0033574">
    <property type="term" value="P:response to testosterone"/>
    <property type="evidence" value="ECO:0007669"/>
    <property type="project" value="Ensembl"/>
</dbReference>
<dbReference type="GO" id="GO:0070086">
    <property type="term" value="P:ubiquitin-dependent endocytosis"/>
    <property type="evidence" value="ECO:0000315"/>
    <property type="project" value="MGI"/>
</dbReference>
<dbReference type="GO" id="GO:0006511">
    <property type="term" value="P:ubiquitin-dependent protein catabolic process"/>
    <property type="evidence" value="ECO:0000315"/>
    <property type="project" value="MGI"/>
</dbReference>
<dbReference type="CDD" id="cd16708">
    <property type="entry name" value="RING-HC_Cbl"/>
    <property type="match status" value="1"/>
</dbReference>
<dbReference type="CDD" id="cd09920">
    <property type="entry name" value="SH2_Cbl-b_TKB"/>
    <property type="match status" value="1"/>
</dbReference>
<dbReference type="CDD" id="cd14393">
    <property type="entry name" value="UBA_c-Cbl"/>
    <property type="match status" value="1"/>
</dbReference>
<dbReference type="FunFam" id="1.10.238.10:FF:000022">
    <property type="entry name" value="E3 ubiquitin-protein ligase CBL"/>
    <property type="match status" value="1"/>
</dbReference>
<dbReference type="FunFam" id="1.10.8.10:FF:000030">
    <property type="entry name" value="E3 ubiquitin-protein ligase CBL"/>
    <property type="match status" value="1"/>
</dbReference>
<dbReference type="FunFam" id="1.20.930.20:FF:000001">
    <property type="entry name" value="E3 ubiquitin-protein ligase CBL"/>
    <property type="match status" value="1"/>
</dbReference>
<dbReference type="FunFam" id="3.30.40.10:FF:000015">
    <property type="entry name" value="E3 ubiquitin-protein ligase CBL"/>
    <property type="match status" value="1"/>
</dbReference>
<dbReference type="FunFam" id="3.30.505.10:FF:000154">
    <property type="entry name" value="E3 ubiquitin-protein ligase CBL"/>
    <property type="match status" value="1"/>
</dbReference>
<dbReference type="Gene3D" id="1.20.930.20">
    <property type="entry name" value="Adaptor protein Cbl, N-terminal domain"/>
    <property type="match status" value="1"/>
</dbReference>
<dbReference type="Gene3D" id="1.10.8.10">
    <property type="entry name" value="DNA helicase RuvA subunit, C-terminal domain"/>
    <property type="match status" value="1"/>
</dbReference>
<dbReference type="Gene3D" id="1.10.238.10">
    <property type="entry name" value="EF-hand"/>
    <property type="match status" value="1"/>
</dbReference>
<dbReference type="Gene3D" id="3.30.505.10">
    <property type="entry name" value="SH2 domain"/>
    <property type="match status" value="1"/>
</dbReference>
<dbReference type="Gene3D" id="3.30.40.10">
    <property type="entry name" value="Zinc/RING finger domain, C3HC4 (zinc finger)"/>
    <property type="match status" value="1"/>
</dbReference>
<dbReference type="InterPro" id="IPR024162">
    <property type="entry name" value="Adaptor_Cbl"/>
</dbReference>
<dbReference type="InterPro" id="IPR014741">
    <property type="entry name" value="Adaptor_Cbl_EF_hand-like"/>
</dbReference>
<dbReference type="InterPro" id="IPR036537">
    <property type="entry name" value="Adaptor_Cbl_N_dom_sf"/>
</dbReference>
<dbReference type="InterPro" id="IPR003153">
    <property type="entry name" value="Adaptor_Cbl_N_hlx"/>
</dbReference>
<dbReference type="InterPro" id="IPR014742">
    <property type="entry name" value="Adaptor_Cbl_SH2-like"/>
</dbReference>
<dbReference type="InterPro" id="IPR024159">
    <property type="entry name" value="Cbl_PTB"/>
</dbReference>
<dbReference type="InterPro" id="IPR011992">
    <property type="entry name" value="EF-hand-dom_pair"/>
</dbReference>
<dbReference type="InterPro" id="IPR036860">
    <property type="entry name" value="SH2_dom_sf"/>
</dbReference>
<dbReference type="InterPro" id="IPR015940">
    <property type="entry name" value="UBA"/>
</dbReference>
<dbReference type="InterPro" id="IPR009060">
    <property type="entry name" value="UBA-like_sf"/>
</dbReference>
<dbReference type="InterPro" id="IPR018957">
    <property type="entry name" value="Znf_C3HC4_RING-type"/>
</dbReference>
<dbReference type="InterPro" id="IPR001841">
    <property type="entry name" value="Znf_RING"/>
</dbReference>
<dbReference type="InterPro" id="IPR013083">
    <property type="entry name" value="Znf_RING/FYVE/PHD"/>
</dbReference>
<dbReference type="InterPro" id="IPR017907">
    <property type="entry name" value="Znf_RING_CS"/>
</dbReference>
<dbReference type="PANTHER" id="PTHR23007">
    <property type="entry name" value="CBL"/>
    <property type="match status" value="1"/>
</dbReference>
<dbReference type="PANTHER" id="PTHR23007:SF5">
    <property type="entry name" value="E3 UBIQUITIN-PROTEIN LIGASE CBL"/>
    <property type="match status" value="1"/>
</dbReference>
<dbReference type="Pfam" id="PF02262">
    <property type="entry name" value="Cbl_N"/>
    <property type="match status" value="1"/>
</dbReference>
<dbReference type="Pfam" id="PF02761">
    <property type="entry name" value="Cbl_N2"/>
    <property type="match status" value="1"/>
</dbReference>
<dbReference type="Pfam" id="PF02762">
    <property type="entry name" value="Cbl_N3"/>
    <property type="match status" value="1"/>
</dbReference>
<dbReference type="Pfam" id="PF00627">
    <property type="entry name" value="UBA"/>
    <property type="match status" value="1"/>
</dbReference>
<dbReference type="Pfam" id="PF00097">
    <property type="entry name" value="zf-C3HC4"/>
    <property type="match status" value="1"/>
</dbReference>
<dbReference type="SMART" id="SM00184">
    <property type="entry name" value="RING"/>
    <property type="match status" value="1"/>
</dbReference>
<dbReference type="SMART" id="SM00165">
    <property type="entry name" value="UBA"/>
    <property type="match status" value="1"/>
</dbReference>
<dbReference type="SUPFAM" id="SSF47473">
    <property type="entry name" value="EF-hand"/>
    <property type="match status" value="1"/>
</dbReference>
<dbReference type="SUPFAM" id="SSF47668">
    <property type="entry name" value="N-terminal domain of cbl (N-cbl)"/>
    <property type="match status" value="1"/>
</dbReference>
<dbReference type="SUPFAM" id="SSF57850">
    <property type="entry name" value="RING/U-box"/>
    <property type="match status" value="1"/>
</dbReference>
<dbReference type="SUPFAM" id="SSF55550">
    <property type="entry name" value="SH2 domain"/>
    <property type="match status" value="1"/>
</dbReference>
<dbReference type="SUPFAM" id="SSF46934">
    <property type="entry name" value="UBA-like"/>
    <property type="match status" value="1"/>
</dbReference>
<dbReference type="PROSITE" id="PS51506">
    <property type="entry name" value="CBL_PTB"/>
    <property type="match status" value="1"/>
</dbReference>
<dbReference type="PROSITE" id="PS50030">
    <property type="entry name" value="UBA"/>
    <property type="match status" value="1"/>
</dbReference>
<dbReference type="PROSITE" id="PS00518">
    <property type="entry name" value="ZF_RING_1"/>
    <property type="match status" value="1"/>
</dbReference>
<dbReference type="PROSITE" id="PS50089">
    <property type="entry name" value="ZF_RING_2"/>
    <property type="match status" value="1"/>
</dbReference>
<proteinExistence type="evidence at protein level"/>
<keyword id="KW-0002">3D-structure</keyword>
<keyword id="KW-0106">Calcium</keyword>
<keyword id="KW-1003">Cell membrane</keyword>
<keyword id="KW-0966">Cell projection</keyword>
<keyword id="KW-0963">Cytoplasm</keyword>
<keyword id="KW-0333">Golgi apparatus</keyword>
<keyword id="KW-0472">Membrane</keyword>
<keyword id="KW-0479">Metal-binding</keyword>
<keyword id="KW-0597">Phosphoprotein</keyword>
<keyword id="KW-0656">Proto-oncogene</keyword>
<keyword id="KW-1185">Reference proteome</keyword>
<keyword id="KW-0677">Repeat</keyword>
<keyword id="KW-0808">Transferase</keyword>
<keyword id="KW-0832">Ubl conjugation</keyword>
<keyword id="KW-0833">Ubl conjugation pathway</keyword>
<keyword id="KW-0862">Zinc</keyword>
<keyword id="KW-0863">Zinc-finger</keyword>
<name>CBL_MOUSE</name>
<evidence type="ECO:0000250" key="1"/>
<evidence type="ECO:0000250" key="2">
    <source>
        <dbReference type="UniProtKB" id="P22681"/>
    </source>
</evidence>
<evidence type="ECO:0000255" key="3">
    <source>
        <dbReference type="PROSITE-ProRule" id="PRU00175"/>
    </source>
</evidence>
<evidence type="ECO:0000255" key="4">
    <source>
        <dbReference type="PROSITE-ProRule" id="PRU00212"/>
    </source>
</evidence>
<evidence type="ECO:0000255" key="5">
    <source>
        <dbReference type="PROSITE-ProRule" id="PRU00839"/>
    </source>
</evidence>
<evidence type="ECO:0000256" key="6">
    <source>
        <dbReference type="SAM" id="MobiDB-lite"/>
    </source>
</evidence>
<evidence type="ECO:0000269" key="7">
    <source>
    </source>
</evidence>
<evidence type="ECO:0000269" key="8">
    <source>
    </source>
</evidence>
<evidence type="ECO:0000269" key="9">
    <source>
    </source>
</evidence>
<evidence type="ECO:0000269" key="10">
    <source>
    </source>
</evidence>
<evidence type="ECO:0000269" key="11">
    <source>
    </source>
</evidence>
<evidence type="ECO:0000269" key="12">
    <source>
    </source>
</evidence>
<evidence type="ECO:0000269" key="13">
    <source>
    </source>
</evidence>
<evidence type="ECO:0000269" key="14">
    <source>
    </source>
</evidence>
<evidence type="ECO:0000269" key="15">
    <source>
    </source>
</evidence>
<evidence type="ECO:0000269" key="16">
    <source>
    </source>
</evidence>
<evidence type="ECO:0000269" key="17">
    <source>
    </source>
</evidence>
<evidence type="ECO:0000269" key="18">
    <source>
    </source>
</evidence>
<evidence type="ECO:0000269" key="19">
    <source>
    </source>
</evidence>
<evidence type="ECO:0000269" key="20">
    <source>
    </source>
</evidence>
<evidence type="ECO:0000269" key="21">
    <source>
    </source>
</evidence>
<evidence type="ECO:0000269" key="22">
    <source>
    </source>
</evidence>
<evidence type="ECO:0000269" key="23">
    <source>
    </source>
</evidence>
<evidence type="ECO:0000269" key="24">
    <source>
    </source>
</evidence>
<evidence type="ECO:0000269" key="25">
    <source>
    </source>
</evidence>
<evidence type="ECO:0000269" key="26">
    <source>
    </source>
</evidence>
<evidence type="ECO:0000269" key="27">
    <source>
    </source>
</evidence>
<evidence type="ECO:0000305" key="28"/>
<evidence type="ECO:0007744" key="29">
    <source>
    </source>
</evidence>
<evidence type="ECO:0007744" key="30">
    <source>
    </source>
</evidence>
<evidence type="ECO:0007829" key="31">
    <source>
        <dbReference type="PDB" id="2D9S"/>
    </source>
</evidence>
<protein>
    <recommendedName>
        <fullName>E3 ubiquitin-protein ligase CBL</fullName>
        <ecNumber evidence="10 18">2.3.2.27</ecNumber>
    </recommendedName>
    <alternativeName>
        <fullName>Casitas B-lineage lymphoma proto-oncogene</fullName>
    </alternativeName>
    <alternativeName>
        <fullName>Proto-oncogene c-Cbl</fullName>
    </alternativeName>
    <alternativeName>
        <fullName evidence="28">RING-type E3 ubiquitin transferase CBL</fullName>
    </alternativeName>
    <alternativeName>
        <fullName>Signal transduction protein CBL</fullName>
    </alternativeName>
</protein>
<feature type="chain" id="PRO_0000055859" description="E3 ubiquitin-protein ligase CBL">
    <location>
        <begin position="1"/>
        <end position="913"/>
    </location>
</feature>
<feature type="domain" description="Cbl-PTB" evidence="5">
    <location>
        <begin position="45"/>
        <end position="349"/>
    </location>
</feature>
<feature type="domain" description="UBA" evidence="4">
    <location>
        <begin position="863"/>
        <end position="902"/>
    </location>
</feature>
<feature type="zinc finger region" description="RING-type" evidence="3">
    <location>
        <begin position="379"/>
        <end position="418"/>
    </location>
</feature>
<feature type="region of interest" description="Sufficient for interaction with EPHB1" evidence="15">
    <location>
        <begin position="1"/>
        <end position="355"/>
    </location>
</feature>
<feature type="region of interest" description="4H">
    <location>
        <begin position="45"/>
        <end position="173"/>
    </location>
</feature>
<feature type="region of interest" description="EF-hand-like">
    <location>
        <begin position="174"/>
        <end position="246"/>
    </location>
</feature>
<feature type="region of interest" description="SH2-like">
    <location>
        <begin position="247"/>
        <end position="349"/>
    </location>
</feature>
<feature type="region of interest" description="Linker">
    <location>
        <begin position="350"/>
        <end position="378"/>
    </location>
</feature>
<feature type="region of interest" description="Required for ubiquitination of SPRED2" evidence="2">
    <location>
        <begin position="356"/>
        <end position="913"/>
    </location>
</feature>
<feature type="region of interest" description="Disordered" evidence="6">
    <location>
        <begin position="430"/>
        <end position="460"/>
    </location>
</feature>
<feature type="region of interest" description="Disordered" evidence="6">
    <location>
        <begin position="476"/>
        <end position="613"/>
    </location>
</feature>
<feature type="region of interest" description="Interaction with CD2AP" evidence="1">
    <location>
        <begin position="646"/>
        <end position="913"/>
    </location>
</feature>
<feature type="region of interest" description="Disordered" evidence="6">
    <location>
        <begin position="647"/>
        <end position="727"/>
    </location>
</feature>
<feature type="region of interest" description="Disordered" evidence="6">
    <location>
        <begin position="750"/>
        <end position="787"/>
    </location>
</feature>
<feature type="region of interest" description="Disordered" evidence="6">
    <location>
        <begin position="814"/>
        <end position="863"/>
    </location>
</feature>
<feature type="compositionally biased region" description="Polar residues" evidence="6">
    <location>
        <begin position="509"/>
        <end position="521"/>
    </location>
</feature>
<feature type="compositionally biased region" description="Pro residues" evidence="6">
    <location>
        <begin position="531"/>
        <end position="548"/>
    </location>
</feature>
<feature type="compositionally biased region" description="Polar residues" evidence="6">
    <location>
        <begin position="750"/>
        <end position="770"/>
    </location>
</feature>
<feature type="compositionally biased region" description="Acidic residues" evidence="6">
    <location>
        <begin position="771"/>
        <end position="780"/>
    </location>
</feature>
<feature type="binding site" evidence="2">
    <location>
        <position position="227"/>
    </location>
    <ligand>
        <name>Ca(2+)</name>
        <dbReference type="ChEBI" id="CHEBI:29108"/>
    </ligand>
</feature>
<feature type="binding site" evidence="2">
    <location>
        <position position="229"/>
    </location>
    <ligand>
        <name>Ca(2+)</name>
        <dbReference type="ChEBI" id="CHEBI:29108"/>
    </ligand>
</feature>
<feature type="binding site" evidence="2">
    <location>
        <position position="231"/>
    </location>
    <ligand>
        <name>Ca(2+)</name>
        <dbReference type="ChEBI" id="CHEBI:29108"/>
    </ligand>
</feature>
<feature type="binding site" evidence="2">
    <location>
        <position position="233"/>
    </location>
    <ligand>
        <name>Ca(2+)</name>
        <dbReference type="ChEBI" id="CHEBI:29108"/>
    </ligand>
</feature>
<feature type="binding site" evidence="2">
    <location>
        <position position="238"/>
    </location>
    <ligand>
        <name>Ca(2+)</name>
        <dbReference type="ChEBI" id="CHEBI:29108"/>
    </ligand>
</feature>
<feature type="binding site" evidence="1">
    <location>
        <position position="292"/>
    </location>
    <ligand>
        <name>4-O-phospho-L-tyrosine</name>
        <dbReference type="ChEBI" id="CHEBI:62338"/>
    </ligand>
</feature>
<feature type="modified residue" description="Phosphotyrosine" evidence="2">
    <location>
        <position position="369"/>
    </location>
</feature>
<feature type="modified residue" description="Phosphoserine" evidence="2">
    <location>
        <position position="437"/>
    </location>
</feature>
<feature type="modified residue" description="Phosphoserine" evidence="2">
    <location>
        <position position="450"/>
    </location>
</feature>
<feature type="modified residue" description="Phosphoserine" evidence="2">
    <location>
        <position position="481"/>
    </location>
</feature>
<feature type="modified residue" description="Phosphoserine" evidence="30">
    <location>
        <position position="617"/>
    </location>
</feature>
<feature type="modified residue" description="Phosphoserine" evidence="30">
    <location>
        <position position="640"/>
    </location>
</feature>
<feature type="modified residue" description="Phosphoserine" evidence="29">
    <location>
        <position position="666"/>
    </location>
</feature>
<feature type="modified residue" description="Phosphoserine" evidence="29">
    <location>
        <position position="667"/>
    </location>
</feature>
<feature type="modified residue" description="Phosphotyrosine" evidence="29">
    <location>
        <position position="672"/>
    </location>
</feature>
<feature type="modified residue" description="Phosphoserine" evidence="30">
    <location>
        <position position="692"/>
    </location>
</feature>
<feature type="modified residue" description="Phosphotyrosine; by ABL1" evidence="2">
    <location>
        <position position="698"/>
    </location>
</feature>
<feature type="modified residue" description="Phosphotyrosine; by SRC" evidence="2">
    <location>
        <position position="737"/>
    </location>
</feature>
<feature type="modified residue" description="Phosphotyrosine" evidence="2">
    <location>
        <position position="780"/>
    </location>
</feature>
<feature type="modified residue" description="Phosphoserine" evidence="2">
    <location>
        <position position="907"/>
    </location>
</feature>
<feature type="sequence variant" description="In oncogenic variant 70Z/3.">
    <location>
        <begin position="364"/>
        <end position="380"/>
    </location>
</feature>
<feature type="mutagenesis site" description="Abolishes interaction with ZAP70, but does not affect interaction with SLA." evidence="9">
    <original>G</original>
    <variation>E</variation>
    <location>
        <position position="304"/>
    </location>
</feature>
<feature type="sequence conflict" description="In Ref. 1; CAA40394." evidence="28" ref="1">
    <original>KL</original>
    <variation>NV</variation>
    <location>
        <begin position="72"/>
        <end position="73"/>
    </location>
</feature>
<feature type="sequence conflict" description="In Ref. 2; BAC26087." evidence="28" ref="2">
    <original>E</original>
    <variation>D</variation>
    <location>
        <position position="218"/>
    </location>
</feature>
<feature type="sequence conflict" description="In Ref. 1; CAA40394." evidence="28" ref="1">
    <original>P</original>
    <variation>T</variation>
    <location>
        <position position="592"/>
    </location>
</feature>
<feature type="sequence conflict" description="In Ref. 1; CAA40394." evidence="28" ref="1">
    <original>N</original>
    <variation>T</variation>
    <location>
        <position position="742"/>
    </location>
</feature>
<feature type="helix" evidence="31">
    <location>
        <begin position="865"/>
        <end position="874"/>
    </location>
</feature>
<feature type="helix" evidence="31">
    <location>
        <begin position="878"/>
        <end position="887"/>
    </location>
</feature>
<feature type="turn" evidence="31">
    <location>
        <begin position="888"/>
        <end position="890"/>
    </location>
</feature>
<feature type="helix" evidence="31">
    <location>
        <begin position="892"/>
        <end position="902"/>
    </location>
</feature>
<sequence>MAGNVKKSSGAGGGGSGGSGAGGLIGLMKDAFQPHHHHHHLSPHPPCTVDKKMVEKCWKLMDKVVRLCQNPKLALKNSPPYILDLLPDTYQHLRTVLSRYEGKMETLGENEYFRVFMENLMKKTKQTISLFKEGKERMYEENSQPRRNLTKLSLIFSHMLAELKGIFPSGLFQGDTFRITKADAAEFWRKAFGEKTIVPWKSFRQALHEVHPISSGLEAMALKSTIDLTCNDYISVFEFDIFTRLFQPWSSLLRNWNSLAVTHPGYMAFLTYDEVKARLQKFIHKPGSYIFRLSCTRLGQWAIGYVTADGNILQTIPHNKPLFQALIDGFREGFYLFPDGRNQNPDLTGLCEPTPQDHIKVTQEQYELYCEMGSTFQLCKICAENDKDVKIEPCGHLMCTSCLTSWQESEGQGCPFCRCEIKGTEPIVVDPFDPRGSGSLLRQGAEGAPSPNYDDDDDERADDSLFMMKELAGAKVERPSSPFSMAPQASLPPVPPRLDLLQQRAPVPASTSVLGTASKAASGSLHKDKPLPIPPTLRDLPPPPPPDRPYSVGAETRPQRRPLPCTPGDCPSRDKLPPVPSSRPGDSWLSRPIPKVPVATPNPGDPWNGRELTNRHSLPFSLPSQMEPRADVPRLGSTFSLDTSMTMNSSPVAGPESEHPKIKPSSSANAIYSLAARPLPMPKLPPGEQGESEEDTEYMTPTSRPVGVQKPEPKRPLEATQSSRACDCDQQIDSCTYEAMYNIQSQALSVAENSASGEGNLATAHTSTGPEESENEDDGYDVPKPPVPAVLARRTLSDISNASSSFGWLSLDGDPTNFNEGSQVPERPPKPFPRRINSERKASSYQQGGGATANPVATAPSPQLSSEIERLMSQGYSYQDIQKALVIAHNNIEMAKNILREFVSISSPAHVAT</sequence>
<organism>
    <name type="scientific">Mus musculus</name>
    <name type="common">Mouse</name>
    <dbReference type="NCBI Taxonomy" id="10090"/>
    <lineage>
        <taxon>Eukaryota</taxon>
        <taxon>Metazoa</taxon>
        <taxon>Chordata</taxon>
        <taxon>Craniata</taxon>
        <taxon>Vertebrata</taxon>
        <taxon>Euteleostomi</taxon>
        <taxon>Mammalia</taxon>
        <taxon>Eutheria</taxon>
        <taxon>Euarchontoglires</taxon>
        <taxon>Glires</taxon>
        <taxon>Rodentia</taxon>
        <taxon>Myomorpha</taxon>
        <taxon>Muroidea</taxon>
        <taxon>Muridae</taxon>
        <taxon>Murinae</taxon>
        <taxon>Mus</taxon>
        <taxon>Mus</taxon>
    </lineage>
</organism>
<accession>P22682</accession>
<accession>Q3U527</accession>
<accession>Q8CEA1</accession>
<comment type="function">
    <text evidence="2 8 10 17 18 21 26">E3 ubiquitin-protein ligase that acts as a negative regulator of many signaling pathways by mediating ubiquitination of cell surface receptors (PubMed:10393178, PubMed:12649282, PubMed:19265199, PubMed:20100865, PubMed:9653117). Accepts ubiquitin from specific E2 ubiquitin-conjugating enzymes, and then transfers it to substrates promoting their degradation by the proteasome (PubMed:12649282, PubMed:20100865). Recognizes activated receptor tyrosine kinases, including KIT, FLT1, FGFR1, FGFR2, PDGFRA, PDGFRB, CSF1R, EPHA8 and KDR and mediates their ubiquitination to terminate signaling (PubMed:19265199). Recognizes membrane-bound HCK, SRC and other kinases of the SRC family and mediates their ubiquitination and degradation (By similarity). Ubiquitinates EGFR and SPRY2 (By similarity). Ubiquitinates NECTIN1 following association between NECTIN1 and herpes simplex virus 1/HHV-1 envelope glycoprotein D, leading to NECTIN1 removal from cell surface (By similarity). Participates in signal transduction in hematopoietic cells (By similarity). Plays an important role in the regulation of osteoblast differentiation and apoptosis (By similarity). Essential for osteoclastic bone resorption (By similarity). The 'Tyr-731' phosphorylated form induces the activation and recruitment of phosphatidylinositol 3-kinase to the cell membrane in a signaling pathway that is critical for osteoclast function (By similarity). May be functionally coupled with the E2 ubiquitin-protein ligase UB2D3 (By similarity). In association with CBLB, required for proper feedback inhibition of ciliary platelet-derived growth factor receptor-alpha (PDGFRA) signaling pathway via ubiquitination and internalization of PDGFRA (PubMed:29237719).</text>
</comment>
<comment type="catalytic activity">
    <reaction evidence="10 18">
        <text>S-ubiquitinyl-[E2 ubiquitin-conjugating enzyme]-L-cysteine + [acceptor protein]-L-lysine = [E2 ubiquitin-conjugating enzyme]-L-cysteine + N(6)-ubiquitinyl-[acceptor protein]-L-lysine.</text>
        <dbReference type="EC" id="2.3.2.27"/>
    </reaction>
</comment>
<comment type="pathway">
    <text evidence="10 18">Protein modification; protein ubiquitination.</text>
</comment>
<comment type="subunit">
    <text evidence="2 7 9 10 11 12 13 14 15 16 19 20 22 25 27">Forms homodimers; IFT20 promotes the formation of stable homodimers (By similarity). Interacts (phosphorylated) with PIK3R1. Interacts with phosphorylated LAT2 (By similarity). Associates with NCK via its SH3 domain. The phosphorylated C-terminus interacts with CD2AP via its second SH3 domain. Binds to UBE2L3. Interacts with adapters SLA, SLA2 and with the phosphorylated C-terminus of SH2B2. Interacts with EGFR, SYK and ZAP70 via the highly conserved Cbl-N region. Interacts with FGR. Also interacts with BLK, SORBS1 and INPPL1/SHIP2. Interacts with CBLB. Interacts with TEK/TIE2 (tyrosine phosphorylated) (By similarity). Interacts with ALK, AXL and FGFR2. Interacts with CSF1R, EPHB1, FLT1, KDR, PDGFRA and PDGFRB; regulates receptor degradation through ubiquitination. Interacts with HCK and LYN. Interacts with ATX2 (PubMed:18602463). Interacts with SH3KBP1 and this interaction is inhibited in the presence of SHKBP1 or ARAP1 (PubMed:21830225, PubMed:29589748). Interacts with SIGLEC10 (PubMed:23374343). Interacts with IFT20 (By similarity). Interacts with SPRY2; the interaction inhibits CBL-mediated ubiquitination of EGFR (By similarity). Interacts (phosphorylated at Tyr-780) with tensin TNS4 (via SH2 domain); the interaction is enhanced in the presence of EGF and reduces interaction of CBL with EGFR (By similarity). Interacts with EGFR; the interaction is reduced in the presence of TNS4 (By similarity). Interacts with CD5 (By similarity). Interacts with CD93 (By similarity).</text>
</comment>
<comment type="interaction">
    <interactant intactId="EBI-640919">
        <id>P22682</id>
    </interactant>
    <interactant intactId="EBI-644807">
        <id>Q9JLQ0</id>
        <label>Cd2ap</label>
    </interactant>
    <organismsDiffer>false</organismsDiffer>
    <experiments>5</experiments>
</comment>
<comment type="interaction">
    <interactant intactId="EBI-640919">
        <id>P22682</id>
    </interactant>
    <interactant intactId="EBI-12600513">
        <id>P13379</id>
        <label>Cd5</label>
    </interactant>
    <organismsDiffer>false</organismsDiffer>
    <experiments>5</experiments>
</comment>
<comment type="interaction">
    <interactant intactId="EBI-640919">
        <id>P22682</id>
    </interactant>
    <interactant intactId="EBI-6296235">
        <id>Q01279</id>
        <label>Egfr</label>
    </interactant>
    <organismsDiffer>false</organismsDiffer>
    <experiments>2</experiments>
</comment>
<comment type="interaction">
    <interactant intactId="EBI-640919">
        <id>P22682</id>
    </interactant>
    <interactant intactId="EBI-524514">
        <id>P39688</id>
        <label>Fyn</label>
    </interactant>
    <organismsDiffer>false</organismsDiffer>
    <experiments>5</experiments>
</comment>
<comment type="interaction">
    <interactant intactId="EBI-640919">
        <id>P22682</id>
    </interactant>
    <interactant intactId="EBI-1798780">
        <id>P16056</id>
        <label>Met</label>
    </interactant>
    <organismsDiffer>false</organismsDiffer>
    <experiments>2</experiments>
</comment>
<comment type="interaction">
    <interactant intactId="EBI-640919">
        <id>P22682</id>
    </interactant>
    <interactant intactId="EBI-6841237">
        <id>Q6Q899</id>
        <label>Rigi</label>
    </interactant>
    <organismsDiffer>false</organismsDiffer>
    <experiments>3</experiments>
</comment>
<comment type="interaction">
    <interactant intactId="EBI-640919">
        <id>P22682</id>
    </interactant>
    <interactant intactId="EBI-297353">
        <id>P00533</id>
        <label>EGFR</label>
    </interactant>
    <organismsDiffer>true</organismsDiffer>
    <experiments>2</experiments>
</comment>
<comment type="subcellular location">
    <subcellularLocation>
        <location>Cytoplasm</location>
    </subcellularLocation>
    <subcellularLocation>
        <location evidence="1">Cell membrane</location>
    </subcellularLocation>
    <subcellularLocation>
        <location evidence="21">Cell projection</location>
        <location evidence="21">Cilium</location>
    </subcellularLocation>
    <subcellularLocation>
        <location evidence="21">Golgi apparatus</location>
    </subcellularLocation>
    <text evidence="1">Colocalizes with FGFR2 in lipid rafts at the cell membrane.</text>
</comment>
<comment type="domain">
    <text evidence="1">The RING-type zinc finger domain mediates binding to an E2 ubiquitin-conjugating enzyme.</text>
</comment>
<comment type="domain">
    <text>The N-terminus is composed of the phosphotyrosine binding (PTB) domain, a short linker region and the RING-type zinc finger. The PTB domain, which is also called TKB (tyrosine kinase binding) domain, is composed of three different subdomains: a four-helix bundle (4H), a calcium-binding EF hand and a divergent SH2 domain.</text>
</comment>
<comment type="PTM">
    <text evidence="1 7 12 13 15 17 22 23 24">Phosphorylated on tyrosine residues by ALK, EGFR, FGR, INSR, SYK, FYN and ZAP70. Phosphorylated on several tyrosine residues by constitutively activated FGFR3. Phosphorylated on tyrosine residues by activated PDGFRA and PDGFRB (By similarity). Phosphorylated on tyrosine residues in response to CSF1R, FLT1 and KIT signaling. Phosphorylated on tyrosine residues by HCK.</text>
</comment>
<comment type="PTM">
    <text evidence="2">Ubiquitinated, leading to its degradation via the proteasome. Ubiquitination is negatively regulated by IFT20.</text>
</comment>
<comment type="disease">
    <text>Can be converted to an oncogenic protein by deletions or mutations that disturb its ability to down-regulate RTKs.</text>
</comment>
<comment type="miscellaneous">
    <text evidence="1">This protein has one functional calcium-binding site.</text>
</comment>
<reference key="1">
    <citation type="journal article" date="1991" name="Oncogene">
        <title>The sequences of the human and mouse c-cbl proto-oncogenes show v-cbl was generated by a large truncation encompassing a proline-rich domain and a leucine zipper-like motif.</title>
        <authorList>
            <person name="Blake T.J."/>
            <person name="Shapiro M."/>
            <person name="Morse H.C. III"/>
            <person name="Langdon W.Y."/>
        </authorList>
    </citation>
    <scope>NUCLEOTIDE SEQUENCE [MRNA]</scope>
    <scope>MUTANT 70Z/3</scope>
</reference>
<reference key="2">
    <citation type="journal article" date="2005" name="Science">
        <title>The transcriptional landscape of the mammalian genome.</title>
        <authorList>
            <person name="Carninci P."/>
            <person name="Kasukawa T."/>
            <person name="Katayama S."/>
            <person name="Gough J."/>
            <person name="Frith M.C."/>
            <person name="Maeda N."/>
            <person name="Oyama R."/>
            <person name="Ravasi T."/>
            <person name="Lenhard B."/>
            <person name="Wells C."/>
            <person name="Kodzius R."/>
            <person name="Shimokawa K."/>
            <person name="Bajic V.B."/>
            <person name="Brenner S.E."/>
            <person name="Batalov S."/>
            <person name="Forrest A.R."/>
            <person name="Zavolan M."/>
            <person name="Davis M.J."/>
            <person name="Wilming L.G."/>
            <person name="Aidinis V."/>
            <person name="Allen J.E."/>
            <person name="Ambesi-Impiombato A."/>
            <person name="Apweiler R."/>
            <person name="Aturaliya R.N."/>
            <person name="Bailey T.L."/>
            <person name="Bansal M."/>
            <person name="Baxter L."/>
            <person name="Beisel K.W."/>
            <person name="Bersano T."/>
            <person name="Bono H."/>
            <person name="Chalk A.M."/>
            <person name="Chiu K.P."/>
            <person name="Choudhary V."/>
            <person name="Christoffels A."/>
            <person name="Clutterbuck D.R."/>
            <person name="Crowe M.L."/>
            <person name="Dalla E."/>
            <person name="Dalrymple B.P."/>
            <person name="de Bono B."/>
            <person name="Della Gatta G."/>
            <person name="di Bernardo D."/>
            <person name="Down T."/>
            <person name="Engstrom P."/>
            <person name="Fagiolini M."/>
            <person name="Faulkner G."/>
            <person name="Fletcher C.F."/>
            <person name="Fukushima T."/>
            <person name="Furuno M."/>
            <person name="Futaki S."/>
            <person name="Gariboldi M."/>
            <person name="Georgii-Hemming P."/>
            <person name="Gingeras T.R."/>
            <person name="Gojobori T."/>
            <person name="Green R.E."/>
            <person name="Gustincich S."/>
            <person name="Harbers M."/>
            <person name="Hayashi Y."/>
            <person name="Hensch T.K."/>
            <person name="Hirokawa N."/>
            <person name="Hill D."/>
            <person name="Huminiecki L."/>
            <person name="Iacono M."/>
            <person name="Ikeo K."/>
            <person name="Iwama A."/>
            <person name="Ishikawa T."/>
            <person name="Jakt M."/>
            <person name="Kanapin A."/>
            <person name="Katoh M."/>
            <person name="Kawasawa Y."/>
            <person name="Kelso J."/>
            <person name="Kitamura H."/>
            <person name="Kitano H."/>
            <person name="Kollias G."/>
            <person name="Krishnan S.P."/>
            <person name="Kruger A."/>
            <person name="Kummerfeld S.K."/>
            <person name="Kurochkin I.V."/>
            <person name="Lareau L.F."/>
            <person name="Lazarevic D."/>
            <person name="Lipovich L."/>
            <person name="Liu J."/>
            <person name="Liuni S."/>
            <person name="McWilliam S."/>
            <person name="Madan Babu M."/>
            <person name="Madera M."/>
            <person name="Marchionni L."/>
            <person name="Matsuda H."/>
            <person name="Matsuzawa S."/>
            <person name="Miki H."/>
            <person name="Mignone F."/>
            <person name="Miyake S."/>
            <person name="Morris K."/>
            <person name="Mottagui-Tabar S."/>
            <person name="Mulder N."/>
            <person name="Nakano N."/>
            <person name="Nakauchi H."/>
            <person name="Ng P."/>
            <person name="Nilsson R."/>
            <person name="Nishiguchi S."/>
            <person name="Nishikawa S."/>
            <person name="Nori F."/>
            <person name="Ohara O."/>
            <person name="Okazaki Y."/>
            <person name="Orlando V."/>
            <person name="Pang K.C."/>
            <person name="Pavan W.J."/>
            <person name="Pavesi G."/>
            <person name="Pesole G."/>
            <person name="Petrovsky N."/>
            <person name="Piazza S."/>
            <person name="Reed J."/>
            <person name="Reid J.F."/>
            <person name="Ring B.Z."/>
            <person name="Ringwald M."/>
            <person name="Rost B."/>
            <person name="Ruan Y."/>
            <person name="Salzberg S.L."/>
            <person name="Sandelin A."/>
            <person name="Schneider C."/>
            <person name="Schoenbach C."/>
            <person name="Sekiguchi K."/>
            <person name="Semple C.A."/>
            <person name="Seno S."/>
            <person name="Sessa L."/>
            <person name="Sheng Y."/>
            <person name="Shibata Y."/>
            <person name="Shimada H."/>
            <person name="Shimada K."/>
            <person name="Silva D."/>
            <person name="Sinclair B."/>
            <person name="Sperling S."/>
            <person name="Stupka E."/>
            <person name="Sugiura K."/>
            <person name="Sultana R."/>
            <person name="Takenaka Y."/>
            <person name="Taki K."/>
            <person name="Tammoja K."/>
            <person name="Tan S.L."/>
            <person name="Tang S."/>
            <person name="Taylor M.S."/>
            <person name="Tegner J."/>
            <person name="Teichmann S.A."/>
            <person name="Ueda H.R."/>
            <person name="van Nimwegen E."/>
            <person name="Verardo R."/>
            <person name="Wei C.L."/>
            <person name="Yagi K."/>
            <person name="Yamanishi H."/>
            <person name="Zabarovsky E."/>
            <person name="Zhu S."/>
            <person name="Zimmer A."/>
            <person name="Hide W."/>
            <person name="Bult C."/>
            <person name="Grimmond S.M."/>
            <person name="Teasdale R.D."/>
            <person name="Liu E.T."/>
            <person name="Brusic V."/>
            <person name="Quackenbush J."/>
            <person name="Wahlestedt C."/>
            <person name="Mattick J.S."/>
            <person name="Hume D.A."/>
            <person name="Kai C."/>
            <person name="Sasaki D."/>
            <person name="Tomaru Y."/>
            <person name="Fukuda S."/>
            <person name="Kanamori-Katayama M."/>
            <person name="Suzuki M."/>
            <person name="Aoki J."/>
            <person name="Arakawa T."/>
            <person name="Iida J."/>
            <person name="Imamura K."/>
            <person name="Itoh M."/>
            <person name="Kato T."/>
            <person name="Kawaji H."/>
            <person name="Kawagashira N."/>
            <person name="Kawashima T."/>
            <person name="Kojima M."/>
            <person name="Kondo S."/>
            <person name="Konno H."/>
            <person name="Nakano K."/>
            <person name="Ninomiya N."/>
            <person name="Nishio T."/>
            <person name="Okada M."/>
            <person name="Plessy C."/>
            <person name="Shibata K."/>
            <person name="Shiraki T."/>
            <person name="Suzuki S."/>
            <person name="Tagami M."/>
            <person name="Waki K."/>
            <person name="Watahiki A."/>
            <person name="Okamura-Oho Y."/>
            <person name="Suzuki H."/>
            <person name="Kawai J."/>
            <person name="Hayashizaki Y."/>
        </authorList>
    </citation>
    <scope>NUCLEOTIDE SEQUENCE [LARGE SCALE MRNA]</scope>
    <source>
        <strain>C57BL/6J</strain>
        <strain>NOD</strain>
        <tissue>Skin</tissue>
        <tissue>Thymus</tissue>
    </source>
</reference>
<reference key="3">
    <citation type="journal article" date="2004" name="Genome Res.">
        <title>The status, quality, and expansion of the NIH full-length cDNA project: the Mammalian Gene Collection (MGC).</title>
        <authorList>
            <consortium name="The MGC Project Team"/>
        </authorList>
    </citation>
    <scope>NUCLEOTIDE SEQUENCE [LARGE SCALE MRNA]</scope>
    <source>
        <tissue>Brain</tissue>
    </source>
</reference>
<reference key="4">
    <citation type="journal article" date="1995" name="J. Biol. Chem.">
        <title>Tyrosine phosphorylation and translocation of the c-cbl protein after activation of tyrosine kinase signaling pathways.</title>
        <authorList>
            <person name="Tanaka S."/>
            <person name="Neff L."/>
            <person name="Baron R."/>
            <person name="Levy J.B."/>
        </authorList>
    </citation>
    <scope>INTERACTION WITH LYN</scope>
    <scope>PHOSPHORYLATION</scope>
</reference>
<reference key="5">
    <citation type="journal article" date="1996" name="J. Biol. Chem.">
        <title>Differential intrinsic enzymatic activity of Syk and Zap-70 protein-tyrosine kinases.</title>
        <authorList>
            <person name="Latour S."/>
            <person name="Chow L.M."/>
            <person name="Veillette A."/>
        </authorList>
    </citation>
    <scope>PHOSPHORYLATION BY SYK</scope>
</reference>
<reference key="6">
    <citation type="journal article" date="1996" name="J. Exp. Med.">
        <title>Association of tyrosine protein kinase Zap-70 with the protooncogene product p120c-cbl in T lymphocytes.</title>
        <authorList>
            <person name="Fournel M."/>
            <person name="Davidson D."/>
            <person name="Weil R."/>
            <person name="Veillette A."/>
        </authorList>
    </citation>
    <scope>PHOSPHORYLATION BY ZAP70</scope>
</reference>
<reference key="7">
    <citation type="journal article" date="1998" name="J. Biol. Chem.">
        <title>Identification of vascular endothelial growth factor receptor-1 tyrosine phosphorylation sites and binding of SH2 domain-containing molecules.</title>
        <authorList>
            <person name="Ito N."/>
            <person name="Wernstedt C."/>
            <person name="Engstrom U."/>
            <person name="Claesson-Welsh L."/>
        </authorList>
    </citation>
    <scope>INTERACTION WITH FLT1</scope>
</reference>
<reference key="8">
    <citation type="journal article" date="1998" name="Mol. Cell. Biol.">
        <title>A novel, multifunctional c-Cbl binding protein in insulin receptor signaling in 3T3-L1 adipocytes.</title>
        <authorList>
            <person name="Ribon V."/>
            <person name="Printen J.A."/>
            <person name="Hoffman N.G."/>
            <person name="Kay B.K."/>
            <person name="Saltiel A.R."/>
        </authorList>
    </citation>
    <scope>INTERACTION WITH SORBS1</scope>
</reference>
<reference key="9">
    <citation type="journal article" date="1998" name="Proc. Natl. Acad. Sci. U.S.A.">
        <title>The tyrosine kinase regulator Cbl enhances the ubiquitination and degradation of the platelet-derived growth factor receptor alpha.</title>
        <authorList>
            <person name="Miyake S."/>
            <person name="Lupher M.L. Jr."/>
            <person name="Druker B."/>
            <person name="Band H."/>
        </authorList>
    </citation>
    <scope>FUNCTION</scope>
</reference>
<reference key="10">
    <citation type="journal article" date="1999" name="Biochem. Biophys. Res. Commun.">
        <title>The proto-oncogene p120(Cbl) is a downstream substrate of the Hck protein-tyrosine kinase.</title>
        <authorList>
            <person name="Howlett C.J."/>
            <person name="Bisson S.A."/>
            <person name="Resek M.E."/>
            <person name="Tigley A.W."/>
            <person name="Robbins S.M."/>
        </authorList>
    </citation>
    <scope>PHOSPHORYLATION BY HCK</scope>
    <scope>INTERACTION WITH HCK</scope>
</reference>
<reference key="11">
    <citation type="journal article" date="1999" name="EMBO J.">
        <title>The Cbl protooncoprotein stimulates CSF-1 receptor multiubiquitination and endocytosis, and attenuates macrophage proliferation.</title>
        <authorList>
            <person name="Lee P.S."/>
            <person name="Wang Y."/>
            <person name="Dominguez M.G."/>
            <person name="Yeung Y.G."/>
            <person name="Murphy M.A."/>
            <person name="Bowtell D.D."/>
            <person name="Stanley E.R."/>
        </authorList>
    </citation>
    <scope>FUNCTION</scope>
</reference>
<reference key="12">
    <citation type="journal article" date="2002" name="Mol. Cell. Biol.">
        <title>Functional cooperation between c-Cbl and Src-like adaptor protein 2 in the negative regulation of T-cell receptor signaling.</title>
        <authorList>
            <person name="Loreto M.P."/>
            <person name="Berry D.M."/>
            <person name="McGlade C.J."/>
        </authorList>
    </citation>
    <scope>INTERACTION WITH SLA2 AND ZAP70</scope>
    <scope>MUTAGENESIS OF GLY-304</scope>
</reference>
<reference key="13">
    <citation type="journal article" date="2003" name="J. Biol. Chem.">
        <title>Vascular endothelial growth factor-dependent down-regulation of Flk-1/KDR involves Cbl-mediated ubiquitination. Consequences on nitric oxide production from endothelial cells.</title>
        <authorList>
            <person name="Duval M."/>
            <person name="Bedard-Goulet S."/>
            <person name="Delisle C."/>
            <person name="Gratton J.P."/>
        </authorList>
    </citation>
    <scope>INTERACTION WITH KDR</scope>
    <scope>FUNCTION</scope>
    <scope>CATALYTIC ACTIVITY</scope>
</reference>
<reference key="14">
    <citation type="journal article" date="2003" name="J. Biol. Chem.">
        <title>The roles of Cbl-b and c-Cbl in insulin-stimulated glucose transport.</title>
        <authorList>
            <person name="Liu J."/>
            <person name="DeYoung S.M."/>
            <person name="Hwang J.B."/>
            <person name="O'Leary E.E."/>
            <person name="Saltiel A.R."/>
        </authorList>
    </citation>
    <scope>INTERACTION WITH CBLB</scope>
</reference>
<reference key="15">
    <citation type="journal article" date="2004" name="FASEB J.">
        <title>The c-Cbl/CD2AP complex regulates VEGF-induced endocytosis and degradation of Flt-1 (VEGFR-1).</title>
        <authorList>
            <person name="Kobayashi S."/>
            <person name="Sawano A."/>
            <person name="Nojima Y."/>
            <person name="Shibuya M."/>
            <person name="Maru Y."/>
        </authorList>
    </citation>
    <scope>INTERACTION WITH FLT1 AND CD2AP</scope>
    <scope>PHOSPHORYLATION IN RESPONSE TO VEGFA</scope>
</reference>
<reference key="16">
    <citation type="journal article" date="2007" name="J. Biol. Chem.">
        <title>The Src-like adaptor protein 2 regulates colony-stimulating factor-1 receptor signaling and down-regulation.</title>
        <authorList>
            <person name="Pakuts B."/>
            <person name="Debonneville C."/>
            <person name="Liontos L.M."/>
            <person name="Loreto M.P."/>
            <person name="McGlade C.J."/>
        </authorList>
    </citation>
    <scope>PHOSPHORYLATION</scope>
    <scope>INTERACTION WITH SLA2 AND CSF1R</scope>
</reference>
<reference key="17">
    <citation type="journal article" date="2007" name="J. Biol. Chem.">
        <title>Binding of Cbl to a phospholipase Cgamma1-docking site on platelet-derived growth factor receptor beta provides a dual mechanism of negative regulation.</title>
        <authorList>
            <person name="Reddi A.L."/>
            <person name="Ying G."/>
            <person name="Duan L."/>
            <person name="Chen G."/>
            <person name="Dimri M."/>
            <person name="Douillard P."/>
            <person name="Druker B.J."/>
            <person name="Naramura M."/>
            <person name="Band V."/>
            <person name="Band H."/>
        </authorList>
    </citation>
    <scope>INTERACTION WITH PDGFRB</scope>
</reference>
<reference key="18">
    <citation type="journal article" date="2007" name="J. Immunol.">
        <title>Quantitative time-resolved phosphoproteomic analysis of mast cell signaling.</title>
        <authorList>
            <person name="Cao L."/>
            <person name="Yu K."/>
            <person name="Banh C."/>
            <person name="Nguyen V."/>
            <person name="Ritz A."/>
            <person name="Raphael B.J."/>
            <person name="Kawakami Y."/>
            <person name="Kawakami T."/>
            <person name="Salomon A.R."/>
        </authorList>
    </citation>
    <scope>PHOSPHORYLATION [LARGE SCALE ANALYSIS] AT SER-666; SER-667 AND TYR-672</scope>
    <scope>IDENTIFICATION BY MASS SPECTROMETRY [LARGE SCALE ANALYSIS]</scope>
    <source>
        <tissue>Mast cell</tissue>
    </source>
</reference>
<reference key="19">
    <citation type="journal article" date="2008" name="Cell. Signal.">
        <title>Ataxin-2 associates with the endocytosis complex and affects EGF receptor trafficking.</title>
        <authorList>
            <person name="Nonis D."/>
            <person name="Schmidt M.H."/>
            <person name="van de Loo S."/>
            <person name="Eich F."/>
            <person name="Dikic I."/>
            <person name="Nowock J."/>
            <person name="Auburger G."/>
        </authorList>
    </citation>
    <scope>INTERACTION WITH ATX2</scope>
</reference>
<reference key="20">
    <citation type="journal article" date="2008" name="Traffic">
        <title>Ligand binding induces Cbl-dependent EphB1 receptor degradation through the lysosomal pathway.</title>
        <authorList>
            <person name="Fasen K."/>
            <person name="Cerretti D.P."/>
            <person name="Huynh-Do U."/>
        </authorList>
    </citation>
    <scope>INTERACTION WITH EPHB1</scope>
    <scope>PHOSPHORYLATION</scope>
</reference>
<reference key="21">
    <citation type="journal article" date="2009" name="J. Biol. Chem.">
        <title>The D816V mutation of c-Kit circumvents a requirement for Src family kinases in c-Kit signal transduction.</title>
        <authorList>
            <person name="Sun J."/>
            <person name="Pedersen M."/>
            <person name="Ronnstrand L."/>
        </authorList>
    </citation>
    <scope>FUNCTION IN UBIQUITINATION OF KIT</scope>
    <scope>PHOSPHORYLATION</scope>
</reference>
<reference key="22">
    <citation type="journal article" date="2010" name="Cell">
        <title>A tissue-specific atlas of mouse protein phosphorylation and expression.</title>
        <authorList>
            <person name="Huttlin E.L."/>
            <person name="Jedrychowski M.P."/>
            <person name="Elias J.E."/>
            <person name="Goswami T."/>
            <person name="Rad R."/>
            <person name="Beausoleil S.A."/>
            <person name="Villen J."/>
            <person name="Haas W."/>
            <person name="Sowa M.E."/>
            <person name="Gygi S.P."/>
        </authorList>
    </citation>
    <scope>PHOSPHORYLATION [LARGE SCALE ANALYSIS] AT SER-617; SER-640 AND SER-692</scope>
    <scope>IDENTIFICATION BY MASS SPECTROMETRY [LARGE SCALE ANALYSIS]</scope>
    <source>
        <tissue>Brain</tissue>
        <tissue>Heart</tissue>
        <tissue>Kidney</tissue>
        <tissue>Lung</tissue>
        <tissue>Spleen</tissue>
        <tissue>Testis</tissue>
    </source>
</reference>
<reference key="23">
    <citation type="journal article" date="2010" name="Mol. Cell. Biol.">
        <title>The SAM domains of Anks family proteins are critically involved in modulating the degradation of EphA receptors.</title>
        <authorList>
            <person name="Kim J."/>
            <person name="Lee H."/>
            <person name="Kim Y."/>
            <person name="Yoo S."/>
            <person name="Park E."/>
            <person name="Park S."/>
        </authorList>
    </citation>
    <scope>FUNCTION IN UBIQUITINATION OF EPHA8</scope>
    <scope>CATALYTIC ACTIVITY</scope>
</reference>
<reference key="24">
    <citation type="journal article" date="2011" name="Cell Biochem. Funct.">
        <title>SH3KBP1-binding protein 1 prevents epidermal growth factor receptor degradation by the interruption of c-Cbl-CIN85 complex.</title>
        <authorList>
            <person name="Feng L."/>
            <person name="Wang J.T."/>
            <person name="Jin H."/>
            <person name="Qian K."/>
            <person name="Geng J.G."/>
        </authorList>
    </citation>
    <scope>INTERACTION WITH SH3KBP1</scope>
</reference>
<reference key="25">
    <citation type="journal article" date="2013" name="Cell">
        <title>Induction of Siglec-G by RNA viruses inhibits the innate immune response by promoting RIG-I degradation.</title>
        <authorList>
            <person name="Chen W."/>
            <person name="Han C."/>
            <person name="Xie B."/>
            <person name="Hu X."/>
            <person name="Yu Q."/>
            <person name="Shi L."/>
            <person name="Wang Q."/>
            <person name="Li D."/>
            <person name="Wang J."/>
            <person name="Zheng P."/>
            <person name="Liu Y."/>
            <person name="Cao X."/>
        </authorList>
    </citation>
    <scope>INTERACTION WITH SIGLEC10</scope>
</reference>
<reference key="26">
    <citation type="journal article" date="2018" name="Biochemistry">
        <title>Biochemical and Structural Studies of the Interaction between ARAP1 and CIN85.</title>
        <authorList>
            <person name="Li Q."/>
            <person name="Yang W."/>
            <person name="Wang Y."/>
            <person name="Liu W."/>
        </authorList>
    </citation>
    <scope>INTERACTION WITH SH3KBP1</scope>
</reference>
<reference key="27">
    <citation type="journal article" date="2018" name="J. Cell Biol.">
        <title>IFT20 modulates ciliary PDGFRalpha signaling by regulating the stability of Cbl E3 ubiquitin ligases.</title>
        <authorList>
            <person name="Schmid F.M."/>
            <person name="Schou K.B."/>
            <person name="Vilhelm M.J."/>
            <person name="Holm M.S."/>
            <person name="Breslin L."/>
            <person name="Farinelli P."/>
            <person name="Larsen L.A."/>
            <person name="Andersen J.S."/>
            <person name="Pedersen L.B."/>
            <person name="Christensen S.T."/>
        </authorList>
    </citation>
    <scope>FUNCTION</scope>
    <scope>SUBCELLULAR LOCATION</scope>
</reference>
<gene>
    <name type="primary">Cbl</name>
</gene>